<accession>O97969</accession>
<name>NPY5R_PIG</name>
<sequence length="446" mass="50474">MGSEIPDYYNKTLASENNTVATRNSGFPVWEDYKGSVDDLQYFLIGLYTFVSLLGFMGNLLILMAVMRKRNQKTTVNFLIGNLAFSDILVVLFCSPFTLTSVLLDQWMFGKVMCHIMPFLQCVTVLVSTLILISIAIVRYHMIKHPVSNNLTANHGYFLIATVWTLGLAICSPLPVFHSLVELQESFGSAWLSSRYLCVESWPSDSYRIAFTISLLLVQYILPLVCLTVSHTSVCRTISCGLSSQDSKLEENEMINLTLQPAKRSGPQAKLSHHPKWTYSFIRRHRRRYSKKTACVRPAPAGPALESREGRPPGKVGSMQSQPPPSNKFMPGVPTCFEVKPEENSDVPEMRVSRSIMRLRKRSRSVFYRLTVLILVFAVSWMPLHLFHVVTDFNDNLISNRHFKLVYCICHLLGMMSCCLNPILYGFLNNGIKADLMSLIHCLHVS</sequence>
<protein>
    <recommendedName>
        <fullName>Neuropeptide Y receptor type 5</fullName>
        <shortName>NPY5-R</shortName>
    </recommendedName>
    <alternativeName>
        <fullName>NPY-Y5 receptor</fullName>
        <shortName>NPYY5-R</shortName>
        <shortName>Y5 receptor</shortName>
    </alternativeName>
</protein>
<proteinExistence type="inferred from homology"/>
<evidence type="ECO:0000250" key="1"/>
<evidence type="ECO:0000255" key="2"/>
<evidence type="ECO:0000255" key="3">
    <source>
        <dbReference type="PROSITE-ProRule" id="PRU00521"/>
    </source>
</evidence>
<evidence type="ECO:0000256" key="4">
    <source>
        <dbReference type="SAM" id="MobiDB-lite"/>
    </source>
</evidence>
<comment type="function">
    <text evidence="1">Receptor for neuropeptide Y and peptide YY. The activity of this receptor is mediated by G proteins that inhibit adenylate cyclase activity. Seems to be associated with food intake. Could be involved in feeding disorders (By similarity).</text>
</comment>
<comment type="subcellular location">
    <subcellularLocation>
        <location>Cell membrane</location>
        <topology>Multi-pass membrane protein</topology>
    </subcellularLocation>
</comment>
<comment type="similarity">
    <text evidence="3">Belongs to the G-protein coupled receptor 1 family.</text>
</comment>
<dbReference type="EMBL" id="AF106083">
    <property type="protein sequence ID" value="AAD13778.1"/>
    <property type="molecule type" value="Genomic_DNA"/>
</dbReference>
<dbReference type="EMBL" id="AB019185">
    <property type="protein sequence ID" value="BAA34055.1"/>
    <property type="molecule type" value="Genomic_DNA"/>
</dbReference>
<dbReference type="RefSeq" id="XP_003129059.1">
    <property type="nucleotide sequence ID" value="XM_003129011.4"/>
</dbReference>
<dbReference type="RefSeq" id="XP_013834158.1">
    <property type="nucleotide sequence ID" value="XM_013978704.1"/>
</dbReference>
<dbReference type="SMR" id="O97969"/>
<dbReference type="FunCoup" id="O97969">
    <property type="interactions" value="141"/>
</dbReference>
<dbReference type="STRING" id="9823.ENSSSCP00000009481"/>
<dbReference type="GlyCosmos" id="O97969">
    <property type="glycosylation" value="2 sites, No reported glycans"/>
</dbReference>
<dbReference type="GlyGen" id="O97969">
    <property type="glycosylation" value="2 sites"/>
</dbReference>
<dbReference type="PaxDb" id="9823-ENSSSCP00000009481"/>
<dbReference type="Ensembl" id="ENSSSCT00000009732.5">
    <property type="protein sequence ID" value="ENSSSCP00000009481.2"/>
    <property type="gene ID" value="ENSSSCG00000008889.5"/>
</dbReference>
<dbReference type="Ensembl" id="ENSSSCT00015033162.1">
    <property type="protein sequence ID" value="ENSSSCP00015013183.1"/>
    <property type="gene ID" value="ENSSSCG00015025007.1"/>
</dbReference>
<dbReference type="Ensembl" id="ENSSSCT00025042416.1">
    <property type="protein sequence ID" value="ENSSSCP00025018053.1"/>
    <property type="gene ID" value="ENSSSCG00025031195.1"/>
</dbReference>
<dbReference type="Ensembl" id="ENSSSCT00030069421.1">
    <property type="protein sequence ID" value="ENSSSCP00030031691.1"/>
    <property type="gene ID" value="ENSSSCG00030049796.1"/>
</dbReference>
<dbReference type="Ensembl" id="ENSSSCT00035006321.1">
    <property type="protein sequence ID" value="ENSSSCP00035002216.1"/>
    <property type="gene ID" value="ENSSSCG00035005031.1"/>
</dbReference>
<dbReference type="Ensembl" id="ENSSSCT00040000658.1">
    <property type="protein sequence ID" value="ENSSSCP00040000161.1"/>
    <property type="gene ID" value="ENSSSCG00040000574.1"/>
</dbReference>
<dbReference type="Ensembl" id="ENSSSCT00045028695.1">
    <property type="protein sequence ID" value="ENSSSCP00045019847.1"/>
    <property type="gene ID" value="ENSSSCG00045016893.1"/>
</dbReference>
<dbReference type="Ensembl" id="ENSSSCT00055011528.1">
    <property type="protein sequence ID" value="ENSSSCP00055009123.1"/>
    <property type="gene ID" value="ENSSSCG00055005921.1"/>
</dbReference>
<dbReference type="Ensembl" id="ENSSSCT00060083863.1">
    <property type="protein sequence ID" value="ENSSSCP00060036352.1"/>
    <property type="gene ID" value="ENSSSCG00060061453.1"/>
</dbReference>
<dbReference type="Ensembl" id="ENSSSCT00065012071.1">
    <property type="protein sequence ID" value="ENSSSCP00065004931.1"/>
    <property type="gene ID" value="ENSSSCG00065009060.1"/>
</dbReference>
<dbReference type="Ensembl" id="ENSSSCT00070024823.1">
    <property type="protein sequence ID" value="ENSSSCP00070020561.1"/>
    <property type="gene ID" value="ENSSSCG00070012727.1"/>
</dbReference>
<dbReference type="Ensembl" id="ENSSSCT00085022464">
    <property type="protein sequence ID" value="ENSSSCP00085015515"/>
    <property type="gene ID" value="ENSSSCG00085011953"/>
</dbReference>
<dbReference type="Ensembl" id="ENSSSCT00085022466">
    <property type="protein sequence ID" value="ENSSSCP00085015516"/>
    <property type="gene ID" value="ENSSSCG00085011953"/>
</dbReference>
<dbReference type="Ensembl" id="ENSSSCT00090017588">
    <property type="protein sequence ID" value="ENSSSCP00090011146"/>
    <property type="gene ID" value="ENSSSCG00090009876"/>
</dbReference>
<dbReference type="Ensembl" id="ENSSSCT00090017595">
    <property type="protein sequence ID" value="ENSSSCP00090011148"/>
    <property type="gene ID" value="ENSSSCG00090009876"/>
</dbReference>
<dbReference type="Ensembl" id="ENSSSCT00105000354">
    <property type="protein sequence ID" value="ENSSSCP00105000221"/>
    <property type="gene ID" value="ENSSSCG00105000204"/>
</dbReference>
<dbReference type="Ensembl" id="ENSSSCT00105000358">
    <property type="protein sequence ID" value="ENSSSCP00105000222"/>
    <property type="gene ID" value="ENSSSCG00105000204"/>
</dbReference>
<dbReference type="Ensembl" id="ENSSSCT00110032146">
    <property type="protein sequence ID" value="ENSSSCP00110021766"/>
    <property type="gene ID" value="ENSSSCG00110016876"/>
</dbReference>
<dbReference type="Ensembl" id="ENSSSCT00110032150">
    <property type="protein sequence ID" value="ENSSSCP00110021769"/>
    <property type="gene ID" value="ENSSSCG00110016876"/>
</dbReference>
<dbReference type="Ensembl" id="ENSSSCT00115036810">
    <property type="protein sequence ID" value="ENSSSCP00115034833"/>
    <property type="gene ID" value="ENSSSCG00115020772"/>
</dbReference>
<dbReference type="Ensembl" id="ENSSSCT00130047718">
    <property type="protein sequence ID" value="ENSSSCP00130033541"/>
    <property type="gene ID" value="ENSSSCG00130024692"/>
</dbReference>
<dbReference type="Ensembl" id="ENSSSCT00130047720">
    <property type="protein sequence ID" value="ENSSSCP00130033542"/>
    <property type="gene ID" value="ENSSSCG00130024692"/>
</dbReference>
<dbReference type="GeneID" id="100517770"/>
<dbReference type="KEGG" id="ssc:100517770"/>
<dbReference type="CTD" id="4889"/>
<dbReference type="VGNC" id="VGNC:90866">
    <property type="gene designation" value="NPY5R"/>
</dbReference>
<dbReference type="eggNOG" id="KOG3656">
    <property type="taxonomic scope" value="Eukaryota"/>
</dbReference>
<dbReference type="GeneTree" id="ENSGT00940000161766"/>
<dbReference type="HOGENOM" id="CLU_009579_6_1_1"/>
<dbReference type="InParanoid" id="O97969"/>
<dbReference type="OMA" id="RHHQDTH"/>
<dbReference type="OrthoDB" id="5981855at2759"/>
<dbReference type="TreeFam" id="TF315303"/>
<dbReference type="Reactome" id="R-SSC-375276">
    <property type="pathway name" value="Peptide ligand-binding receptors"/>
</dbReference>
<dbReference type="Reactome" id="R-SSC-418594">
    <property type="pathway name" value="G alpha (i) signalling events"/>
</dbReference>
<dbReference type="Proteomes" id="UP000008227">
    <property type="component" value="Chromosome 8"/>
</dbReference>
<dbReference type="Proteomes" id="UP000314985">
    <property type="component" value="Chromosome 8"/>
</dbReference>
<dbReference type="Proteomes" id="UP000694570">
    <property type="component" value="Unplaced"/>
</dbReference>
<dbReference type="Proteomes" id="UP000694571">
    <property type="component" value="Unplaced"/>
</dbReference>
<dbReference type="Proteomes" id="UP000694720">
    <property type="component" value="Unplaced"/>
</dbReference>
<dbReference type="Proteomes" id="UP000694722">
    <property type="component" value="Unplaced"/>
</dbReference>
<dbReference type="Proteomes" id="UP000694723">
    <property type="component" value="Unplaced"/>
</dbReference>
<dbReference type="Proteomes" id="UP000694724">
    <property type="component" value="Unplaced"/>
</dbReference>
<dbReference type="Proteomes" id="UP000694725">
    <property type="component" value="Unplaced"/>
</dbReference>
<dbReference type="Proteomes" id="UP000694726">
    <property type="component" value="Unplaced"/>
</dbReference>
<dbReference type="Proteomes" id="UP000694727">
    <property type="component" value="Unplaced"/>
</dbReference>
<dbReference type="Proteomes" id="UP000694728">
    <property type="component" value="Unplaced"/>
</dbReference>
<dbReference type="Bgee" id="ENSSSCG00000008889">
    <property type="expression patterns" value="Expressed in Ammon's horn and 12 other cell types or tissues"/>
</dbReference>
<dbReference type="GO" id="GO:0098982">
    <property type="term" value="C:GABA-ergic synapse"/>
    <property type="evidence" value="ECO:0007669"/>
    <property type="project" value="Ensembl"/>
</dbReference>
<dbReference type="GO" id="GO:0043005">
    <property type="term" value="C:neuron projection"/>
    <property type="evidence" value="ECO:0000318"/>
    <property type="project" value="GO_Central"/>
</dbReference>
<dbReference type="GO" id="GO:0005886">
    <property type="term" value="C:plasma membrane"/>
    <property type="evidence" value="ECO:0000318"/>
    <property type="project" value="GO_Central"/>
</dbReference>
<dbReference type="GO" id="GO:0098793">
    <property type="term" value="C:presynapse"/>
    <property type="evidence" value="ECO:0007669"/>
    <property type="project" value="Ensembl"/>
</dbReference>
<dbReference type="GO" id="GO:0042923">
    <property type="term" value="F:neuropeptide binding"/>
    <property type="evidence" value="ECO:0000318"/>
    <property type="project" value="GO_Central"/>
</dbReference>
<dbReference type="GO" id="GO:0001602">
    <property type="term" value="F:pancreatic polypeptide receptor activity"/>
    <property type="evidence" value="ECO:0000318"/>
    <property type="project" value="GO_Central"/>
</dbReference>
<dbReference type="GO" id="GO:0001601">
    <property type="term" value="F:peptide YY receptor activity"/>
    <property type="evidence" value="ECO:0000318"/>
    <property type="project" value="GO_Central"/>
</dbReference>
<dbReference type="GO" id="GO:0003214">
    <property type="term" value="P:cardiac left ventricle morphogenesis"/>
    <property type="evidence" value="ECO:0007669"/>
    <property type="project" value="Ensembl"/>
</dbReference>
<dbReference type="GO" id="GO:0007268">
    <property type="term" value="P:chemical synaptic transmission"/>
    <property type="evidence" value="ECO:0000318"/>
    <property type="project" value="GO_Central"/>
</dbReference>
<dbReference type="GO" id="GO:0007186">
    <property type="term" value="P:G protein-coupled receptor signaling pathway"/>
    <property type="evidence" value="ECO:0000318"/>
    <property type="project" value="GO_Central"/>
</dbReference>
<dbReference type="GO" id="GO:0003151">
    <property type="term" value="P:outflow tract morphogenesis"/>
    <property type="evidence" value="ECO:0007669"/>
    <property type="project" value="Ensembl"/>
</dbReference>
<dbReference type="GO" id="GO:0099538">
    <property type="term" value="P:synaptic signaling via neuropeptide"/>
    <property type="evidence" value="ECO:0007669"/>
    <property type="project" value="Ensembl"/>
</dbReference>
<dbReference type="CDD" id="cd15398">
    <property type="entry name" value="7tmA_NPY5R"/>
    <property type="match status" value="1"/>
</dbReference>
<dbReference type="Gene3D" id="1.20.1070.10">
    <property type="entry name" value="Rhodopsin 7-helix transmembrane proteins"/>
    <property type="match status" value="1"/>
</dbReference>
<dbReference type="InterPro" id="IPR000276">
    <property type="entry name" value="GPCR_Rhodpsn"/>
</dbReference>
<dbReference type="InterPro" id="IPR017452">
    <property type="entry name" value="GPCR_Rhodpsn_7TM"/>
</dbReference>
<dbReference type="InterPro" id="IPR000393">
    <property type="entry name" value="NPY5_rcpt"/>
</dbReference>
<dbReference type="InterPro" id="IPR000611">
    <property type="entry name" value="NPY_rcpt"/>
</dbReference>
<dbReference type="PANTHER" id="PTHR24235">
    <property type="entry name" value="NEUROPEPTIDE Y RECEPTOR"/>
    <property type="match status" value="1"/>
</dbReference>
<dbReference type="PANTHER" id="PTHR24235:SF10">
    <property type="entry name" value="NEUROPEPTIDE Y RECEPTOR TYPE 5"/>
    <property type="match status" value="1"/>
</dbReference>
<dbReference type="Pfam" id="PF00001">
    <property type="entry name" value="7tm_1"/>
    <property type="match status" value="1"/>
</dbReference>
<dbReference type="PRINTS" id="PR00237">
    <property type="entry name" value="GPCRRHODOPSN"/>
</dbReference>
<dbReference type="PRINTS" id="PR01016">
    <property type="entry name" value="NRPEPTIDEY5R"/>
</dbReference>
<dbReference type="PRINTS" id="PR01012">
    <property type="entry name" value="NRPEPTIDEYR"/>
</dbReference>
<dbReference type="SMART" id="SM01381">
    <property type="entry name" value="7TM_GPCR_Srsx"/>
    <property type="match status" value="1"/>
</dbReference>
<dbReference type="SUPFAM" id="SSF81321">
    <property type="entry name" value="Family A G protein-coupled receptor-like"/>
    <property type="match status" value="1"/>
</dbReference>
<dbReference type="PROSITE" id="PS50262">
    <property type="entry name" value="G_PROTEIN_RECEP_F1_2"/>
    <property type="match status" value="1"/>
</dbReference>
<reference key="1">
    <citation type="submission" date="1998-11" db="EMBL/GenBank/DDBJ databases">
        <title>Porcine NPY receptors NPY1R, NPY2R and NPY5R: cloning, mapping and comparative analysis.</title>
        <authorList>
            <person name="Wraith A."/>
            <person name="Tornsten A."/>
            <person name="Chardon P."/>
            <person name="Harbitz I."/>
            <person name="Chowdhary B.P."/>
            <person name="Andersson L."/>
            <person name="Larhammar D."/>
        </authorList>
    </citation>
    <scope>NUCLEOTIDE SEQUENCE [GENOMIC DNA]</scope>
</reference>
<reference key="2">
    <citation type="submission" date="1998-10" db="EMBL/GenBank/DDBJ databases">
        <title>Sus scrofa gene for neuropeptide Y receptor type 5, complete cds.</title>
        <authorList>
            <person name="Ito Y."/>
            <person name="Minezawa M."/>
        </authorList>
    </citation>
    <scope>NUCLEOTIDE SEQUENCE [GENOMIC DNA]</scope>
    <source>
        <strain>Large white X Duroc</strain>
        <tissue>Kidney</tissue>
    </source>
</reference>
<feature type="chain" id="PRO_0000069941" description="Neuropeptide Y receptor type 5">
    <location>
        <begin position="1"/>
        <end position="446"/>
    </location>
</feature>
<feature type="topological domain" description="Extracellular" evidence="2">
    <location>
        <begin position="1"/>
        <end position="42"/>
    </location>
</feature>
<feature type="transmembrane region" description="Helical; Name=1" evidence="2">
    <location>
        <begin position="43"/>
        <end position="63"/>
    </location>
</feature>
<feature type="topological domain" description="Cytoplasmic" evidence="2">
    <location>
        <begin position="64"/>
        <end position="77"/>
    </location>
</feature>
<feature type="transmembrane region" description="Helical; Name=2" evidence="2">
    <location>
        <begin position="78"/>
        <end position="98"/>
    </location>
</feature>
<feature type="topological domain" description="Extracellular" evidence="2">
    <location>
        <begin position="99"/>
        <end position="117"/>
    </location>
</feature>
<feature type="transmembrane region" description="Helical; Name=3" evidence="2">
    <location>
        <begin position="118"/>
        <end position="138"/>
    </location>
</feature>
<feature type="topological domain" description="Cytoplasmic" evidence="2">
    <location>
        <begin position="139"/>
        <end position="156"/>
    </location>
</feature>
<feature type="transmembrane region" description="Helical; Name=4" evidence="2">
    <location>
        <begin position="157"/>
        <end position="177"/>
    </location>
</feature>
<feature type="topological domain" description="Extracellular" evidence="2">
    <location>
        <begin position="178"/>
        <end position="208"/>
    </location>
</feature>
<feature type="transmembrane region" description="Helical; Name=5" evidence="2">
    <location>
        <begin position="209"/>
        <end position="229"/>
    </location>
</feature>
<feature type="topological domain" description="Cytoplasmic" evidence="2">
    <location>
        <begin position="230"/>
        <end position="369"/>
    </location>
</feature>
<feature type="transmembrane region" description="Helical; Name=6" evidence="2">
    <location>
        <begin position="370"/>
        <end position="390"/>
    </location>
</feature>
<feature type="topological domain" description="Extracellular" evidence="2">
    <location>
        <begin position="391"/>
        <end position="407"/>
    </location>
</feature>
<feature type="transmembrane region" description="Helical; Name=7" evidence="2">
    <location>
        <begin position="408"/>
        <end position="428"/>
    </location>
</feature>
<feature type="topological domain" description="Cytoplasmic" evidence="2">
    <location>
        <begin position="429"/>
        <end position="446"/>
    </location>
</feature>
<feature type="region of interest" description="Disordered" evidence="4">
    <location>
        <begin position="297"/>
        <end position="325"/>
    </location>
</feature>
<feature type="lipid moiety-binding region" description="S-palmitoyl cysteine" evidence="2">
    <location>
        <position position="442"/>
    </location>
</feature>
<feature type="glycosylation site" description="N-linked (GlcNAc...) asparagine" evidence="2">
    <location>
        <position position="10"/>
    </location>
</feature>
<feature type="glycosylation site" description="N-linked (GlcNAc...) asparagine" evidence="2">
    <location>
        <position position="17"/>
    </location>
</feature>
<feature type="disulfide bond" evidence="3">
    <location>
        <begin position="114"/>
        <end position="198"/>
    </location>
</feature>
<gene>
    <name type="primary">NPY5R</name>
    <name type="synonym">NPYR5</name>
</gene>
<keyword id="KW-1003">Cell membrane</keyword>
<keyword id="KW-1015">Disulfide bond</keyword>
<keyword id="KW-0297">G-protein coupled receptor</keyword>
<keyword id="KW-0325">Glycoprotein</keyword>
<keyword id="KW-0449">Lipoprotein</keyword>
<keyword id="KW-0472">Membrane</keyword>
<keyword id="KW-0564">Palmitate</keyword>
<keyword id="KW-0675">Receptor</keyword>
<keyword id="KW-1185">Reference proteome</keyword>
<keyword id="KW-0807">Transducer</keyword>
<keyword id="KW-0812">Transmembrane</keyword>
<keyword id="KW-1133">Transmembrane helix</keyword>
<organism>
    <name type="scientific">Sus scrofa</name>
    <name type="common">Pig</name>
    <dbReference type="NCBI Taxonomy" id="9823"/>
    <lineage>
        <taxon>Eukaryota</taxon>
        <taxon>Metazoa</taxon>
        <taxon>Chordata</taxon>
        <taxon>Craniata</taxon>
        <taxon>Vertebrata</taxon>
        <taxon>Euteleostomi</taxon>
        <taxon>Mammalia</taxon>
        <taxon>Eutheria</taxon>
        <taxon>Laurasiatheria</taxon>
        <taxon>Artiodactyla</taxon>
        <taxon>Suina</taxon>
        <taxon>Suidae</taxon>
        <taxon>Sus</taxon>
    </lineage>
</organism>